<keyword id="KW-0238">DNA-binding</keyword>
<keyword id="KW-0255">Endonuclease</keyword>
<keyword id="KW-0378">Hydrolase</keyword>
<keyword id="KW-0460">Magnesium</keyword>
<keyword id="KW-0479">Metal-binding</keyword>
<keyword id="KW-0540">Nuclease</keyword>
<keyword id="KW-0630">Potassium</keyword>
<keyword id="KW-1185">Reference proteome</keyword>
<organism>
    <name type="scientific">Shewanella woodyi (strain ATCC 51908 / MS32)</name>
    <dbReference type="NCBI Taxonomy" id="392500"/>
    <lineage>
        <taxon>Bacteria</taxon>
        <taxon>Pseudomonadati</taxon>
        <taxon>Pseudomonadota</taxon>
        <taxon>Gammaproteobacteria</taxon>
        <taxon>Alteromonadales</taxon>
        <taxon>Shewanellaceae</taxon>
        <taxon>Shewanella</taxon>
    </lineage>
</organism>
<name>XNI_SHEWM</name>
<comment type="function">
    <text evidence="1">Has flap endonuclease activity. During DNA replication, flap endonucleases cleave the 5'-overhanging flap structure that is generated by displacement synthesis when DNA polymerase encounters the 5'-end of a downstream Okazaki fragment.</text>
</comment>
<comment type="cofactor">
    <cofactor evidence="1">
        <name>Mg(2+)</name>
        <dbReference type="ChEBI" id="CHEBI:18420"/>
    </cofactor>
    <text evidence="1">Binds 2 Mg(2+) per subunit. Only one magnesium ion has a direct interaction with the protein, the other interactions are indirect.</text>
</comment>
<comment type="cofactor">
    <cofactor evidence="1">
        <name>K(+)</name>
        <dbReference type="ChEBI" id="CHEBI:29103"/>
    </cofactor>
    <text evidence="1">Binds 1 K(+) per subunit. The potassium ion strongly increases the affinity for DNA.</text>
</comment>
<comment type="similarity">
    <text evidence="1">Belongs to the Xni family.</text>
</comment>
<feature type="chain" id="PRO_1000138395" description="Flap endonuclease Xni">
    <location>
        <begin position="1"/>
        <end position="252"/>
    </location>
</feature>
<feature type="domain" description="5'-3' exonuclease" evidence="1">
    <location>
        <begin position="162"/>
        <end position="250"/>
    </location>
</feature>
<feature type="region of interest" description="Interaction with DNA" evidence="1">
    <location>
        <begin position="185"/>
        <end position="190"/>
    </location>
</feature>
<feature type="binding site" evidence="1">
    <location>
        <position position="105"/>
    </location>
    <ligand>
        <name>Mg(2+)</name>
        <dbReference type="ChEBI" id="CHEBI:18420"/>
    </ligand>
</feature>
<feature type="binding site" evidence="1">
    <location>
        <position position="172"/>
    </location>
    <ligand>
        <name>K(+)</name>
        <dbReference type="ChEBI" id="CHEBI:29103"/>
    </ligand>
</feature>
<feature type="binding site" evidence="1">
    <location>
        <position position="173"/>
    </location>
    <ligand>
        <name>K(+)</name>
        <dbReference type="ChEBI" id="CHEBI:29103"/>
    </ligand>
</feature>
<feature type="binding site" evidence="1">
    <location>
        <position position="181"/>
    </location>
    <ligand>
        <name>K(+)</name>
        <dbReference type="ChEBI" id="CHEBI:29103"/>
    </ligand>
</feature>
<feature type="binding site" evidence="1">
    <location>
        <position position="183"/>
    </location>
    <ligand>
        <name>K(+)</name>
        <dbReference type="ChEBI" id="CHEBI:29103"/>
    </ligand>
</feature>
<feature type="binding site" evidence="1">
    <location>
        <position position="186"/>
    </location>
    <ligand>
        <name>K(+)</name>
        <dbReference type="ChEBI" id="CHEBI:29103"/>
    </ligand>
</feature>
<protein>
    <recommendedName>
        <fullName evidence="1">Flap endonuclease Xni</fullName>
        <shortName evidence="1">FEN</shortName>
        <ecNumber evidence="1">3.1.-.-</ecNumber>
    </recommendedName>
</protein>
<reference key="1">
    <citation type="submission" date="2008-02" db="EMBL/GenBank/DDBJ databases">
        <title>Complete sequence of Shewanella woodyi ATCC 51908.</title>
        <authorList>
            <consortium name="US DOE Joint Genome Institute"/>
            <person name="Copeland A."/>
            <person name="Lucas S."/>
            <person name="Lapidus A."/>
            <person name="Glavina del Rio T."/>
            <person name="Dalin E."/>
            <person name="Tice H."/>
            <person name="Bruce D."/>
            <person name="Goodwin L."/>
            <person name="Pitluck S."/>
            <person name="Sims D."/>
            <person name="Brettin T."/>
            <person name="Detter J.C."/>
            <person name="Han C."/>
            <person name="Kuske C.R."/>
            <person name="Schmutz J."/>
            <person name="Larimer F."/>
            <person name="Land M."/>
            <person name="Hauser L."/>
            <person name="Kyrpides N."/>
            <person name="Lykidis A."/>
            <person name="Zhao J.-S."/>
            <person name="Richardson P."/>
        </authorList>
    </citation>
    <scope>NUCLEOTIDE SEQUENCE [LARGE SCALE GENOMIC DNA]</scope>
    <source>
        <strain>ATCC 51908 / MS32</strain>
    </source>
</reference>
<accession>B1KQX1</accession>
<dbReference type="EC" id="3.1.-.-" evidence="1"/>
<dbReference type="EMBL" id="CP000961">
    <property type="protein sequence ID" value="ACA87727.1"/>
    <property type="molecule type" value="Genomic_DNA"/>
</dbReference>
<dbReference type="RefSeq" id="WP_012326062.1">
    <property type="nucleotide sequence ID" value="NC_010506.1"/>
</dbReference>
<dbReference type="SMR" id="B1KQX1"/>
<dbReference type="STRING" id="392500.Swoo_3460"/>
<dbReference type="KEGG" id="swd:Swoo_3460"/>
<dbReference type="eggNOG" id="COG0258">
    <property type="taxonomic scope" value="Bacteria"/>
</dbReference>
<dbReference type="HOGENOM" id="CLU_004675_1_2_6"/>
<dbReference type="Proteomes" id="UP000002168">
    <property type="component" value="Chromosome"/>
</dbReference>
<dbReference type="GO" id="GO:0008409">
    <property type="term" value="F:5'-3' exonuclease activity"/>
    <property type="evidence" value="ECO:0007669"/>
    <property type="project" value="InterPro"/>
</dbReference>
<dbReference type="GO" id="GO:0017108">
    <property type="term" value="F:5'-flap endonuclease activity"/>
    <property type="evidence" value="ECO:0007669"/>
    <property type="project" value="UniProtKB-UniRule"/>
</dbReference>
<dbReference type="GO" id="GO:0003677">
    <property type="term" value="F:DNA binding"/>
    <property type="evidence" value="ECO:0007669"/>
    <property type="project" value="UniProtKB-UniRule"/>
</dbReference>
<dbReference type="GO" id="GO:0000287">
    <property type="term" value="F:magnesium ion binding"/>
    <property type="evidence" value="ECO:0007669"/>
    <property type="project" value="UniProtKB-UniRule"/>
</dbReference>
<dbReference type="GO" id="GO:0030955">
    <property type="term" value="F:potassium ion binding"/>
    <property type="evidence" value="ECO:0007669"/>
    <property type="project" value="UniProtKB-UniRule"/>
</dbReference>
<dbReference type="GO" id="GO:0033567">
    <property type="term" value="P:DNA replication, Okazaki fragment processing"/>
    <property type="evidence" value="ECO:0007669"/>
    <property type="project" value="UniProtKB-UniRule"/>
</dbReference>
<dbReference type="CDD" id="cd09898">
    <property type="entry name" value="H3TH_53EXO"/>
    <property type="match status" value="1"/>
</dbReference>
<dbReference type="CDD" id="cd09859">
    <property type="entry name" value="PIN_53EXO"/>
    <property type="match status" value="1"/>
</dbReference>
<dbReference type="FunFam" id="1.10.150.20:FF:000003">
    <property type="entry name" value="DNA polymerase I"/>
    <property type="match status" value="1"/>
</dbReference>
<dbReference type="Gene3D" id="1.10.150.20">
    <property type="entry name" value="5' to 3' exonuclease, C-terminal subdomain"/>
    <property type="match status" value="1"/>
</dbReference>
<dbReference type="Gene3D" id="3.40.50.1010">
    <property type="entry name" value="5'-nuclease"/>
    <property type="match status" value="1"/>
</dbReference>
<dbReference type="HAMAP" id="MF_01192">
    <property type="entry name" value="Xni"/>
    <property type="match status" value="1"/>
</dbReference>
<dbReference type="InterPro" id="IPR020046">
    <property type="entry name" value="5-3_exonucl_a-hlix_arch_N"/>
</dbReference>
<dbReference type="InterPro" id="IPR002421">
    <property type="entry name" value="5-3_exonuclease"/>
</dbReference>
<dbReference type="InterPro" id="IPR036279">
    <property type="entry name" value="5-3_exonuclease_C_sf"/>
</dbReference>
<dbReference type="InterPro" id="IPR020045">
    <property type="entry name" value="DNA_polI_H3TH"/>
</dbReference>
<dbReference type="InterPro" id="IPR038969">
    <property type="entry name" value="FEN"/>
</dbReference>
<dbReference type="InterPro" id="IPR008918">
    <property type="entry name" value="HhH2"/>
</dbReference>
<dbReference type="InterPro" id="IPR029060">
    <property type="entry name" value="PIN-like_dom_sf"/>
</dbReference>
<dbReference type="InterPro" id="IPR022895">
    <property type="entry name" value="Xni"/>
</dbReference>
<dbReference type="NCBIfam" id="NF007017">
    <property type="entry name" value="PRK09482.1"/>
    <property type="match status" value="1"/>
</dbReference>
<dbReference type="PANTHER" id="PTHR42646:SF2">
    <property type="entry name" value="5'-3' EXONUCLEASE FAMILY PROTEIN"/>
    <property type="match status" value="1"/>
</dbReference>
<dbReference type="PANTHER" id="PTHR42646">
    <property type="entry name" value="FLAP ENDONUCLEASE XNI"/>
    <property type="match status" value="1"/>
</dbReference>
<dbReference type="Pfam" id="PF01367">
    <property type="entry name" value="5_3_exonuc"/>
    <property type="match status" value="1"/>
</dbReference>
<dbReference type="Pfam" id="PF02739">
    <property type="entry name" value="5_3_exonuc_N"/>
    <property type="match status" value="1"/>
</dbReference>
<dbReference type="SMART" id="SM00475">
    <property type="entry name" value="53EXOc"/>
    <property type="match status" value="1"/>
</dbReference>
<dbReference type="SMART" id="SM00279">
    <property type="entry name" value="HhH2"/>
    <property type="match status" value="1"/>
</dbReference>
<dbReference type="SUPFAM" id="SSF47807">
    <property type="entry name" value="5' to 3' exonuclease, C-terminal subdomain"/>
    <property type="match status" value="1"/>
</dbReference>
<dbReference type="SUPFAM" id="SSF88723">
    <property type="entry name" value="PIN domain-like"/>
    <property type="match status" value="1"/>
</dbReference>
<evidence type="ECO:0000255" key="1">
    <source>
        <dbReference type="HAMAP-Rule" id="MF_01192"/>
    </source>
</evidence>
<proteinExistence type="inferred from homology"/>
<sequence>MNTFLIIDGLNLVRRIHAAQPNENDVNGLDARVASACKKLLKYHQPSHVAIVWDGDATSWRKTLYEDYKKGRKPMPEALAKSLPALKTHLSELNVNSIDAEAEADDVIATLATKLVNNQGKAIIVSTDKGFTQLTHTNIERWDHFNQAYITIEQREEKLGVERTQFIDYLALAGDSGNKIPGVPGIGPKSASELLKIFRSLSNLYGSLEQVGAKQAKKLEEGKQMARLSYKLVQLQTEIPLNANLSQFRLPQ</sequence>
<gene>
    <name evidence="1" type="primary">xni</name>
    <name evidence="1" type="synonym">ygdG</name>
    <name type="ordered locus">Swoo_3460</name>
</gene>